<accession>Q3ZIZ6</accession>
<evidence type="ECO:0000255" key="1">
    <source>
        <dbReference type="HAMAP-Rule" id="MF_01393"/>
    </source>
</evidence>
<keyword id="KW-0066">ATP synthesis</keyword>
<keyword id="KW-0138">CF(0)</keyword>
<keyword id="KW-0150">Chloroplast</keyword>
<keyword id="KW-0375">Hydrogen ion transport</keyword>
<keyword id="KW-0406">Ion transport</keyword>
<keyword id="KW-0472">Membrane</keyword>
<keyword id="KW-0934">Plastid</keyword>
<keyword id="KW-0793">Thylakoid</keyword>
<keyword id="KW-0812">Transmembrane</keyword>
<keyword id="KW-1133">Transmembrane helix</keyword>
<keyword id="KW-0813">Transport</keyword>
<sequence length="247" mass="27376">MVDKIMNSTANLLFDFAEVSVGQHYYWQIGEYSVHGQVLMTSWFVFAVIAILSIAGNRDLKAIPEGLQNLTEYITEFIRDLAKTQIGEEEYVKWIPFLGTLFLFIFVSNWSGALIPWHIFEIPNGELAAPTNDINTTVALALLTSTAYFYAGFSKKGLGYFKRYVSPAAFLLPINVLEDFTKPLSLSFRLFGNILADELVVGVLVALVPLVVPIPIMLLGLFTSGIQALVFATLAGAYIGESIEDHH</sequence>
<gene>
    <name evidence="1" type="primary">atpI</name>
</gene>
<feature type="chain" id="PRO_0000362595" description="ATP synthase subunit a, chloroplastic">
    <location>
        <begin position="1"/>
        <end position="247"/>
    </location>
</feature>
<feature type="transmembrane region" description="Helical" evidence="1">
    <location>
        <begin position="36"/>
        <end position="56"/>
    </location>
</feature>
<feature type="transmembrane region" description="Helical" evidence="1">
    <location>
        <begin position="95"/>
        <end position="115"/>
    </location>
</feature>
<feature type="transmembrane region" description="Helical" evidence="1">
    <location>
        <begin position="134"/>
        <end position="154"/>
    </location>
</feature>
<feature type="transmembrane region" description="Helical" evidence="1">
    <location>
        <begin position="199"/>
        <end position="219"/>
    </location>
</feature>
<feature type="transmembrane region" description="Helical" evidence="1">
    <location>
        <begin position="220"/>
        <end position="240"/>
    </location>
</feature>
<dbReference type="EMBL" id="AY835431">
    <property type="protein sequence ID" value="AAV80693.1"/>
    <property type="molecule type" value="Genomic_DNA"/>
</dbReference>
<dbReference type="RefSeq" id="YP_636271.1">
    <property type="nucleotide sequence ID" value="NC_008114.1"/>
</dbReference>
<dbReference type="SMR" id="Q3ZIZ6"/>
<dbReference type="GeneID" id="4108765"/>
<dbReference type="GO" id="GO:0009535">
    <property type="term" value="C:chloroplast thylakoid membrane"/>
    <property type="evidence" value="ECO:0007669"/>
    <property type="project" value="UniProtKB-SubCell"/>
</dbReference>
<dbReference type="GO" id="GO:0005886">
    <property type="term" value="C:plasma membrane"/>
    <property type="evidence" value="ECO:0007669"/>
    <property type="project" value="UniProtKB-UniRule"/>
</dbReference>
<dbReference type="GO" id="GO:0045259">
    <property type="term" value="C:proton-transporting ATP synthase complex"/>
    <property type="evidence" value="ECO:0007669"/>
    <property type="project" value="UniProtKB-KW"/>
</dbReference>
<dbReference type="GO" id="GO:0046933">
    <property type="term" value="F:proton-transporting ATP synthase activity, rotational mechanism"/>
    <property type="evidence" value="ECO:0007669"/>
    <property type="project" value="UniProtKB-UniRule"/>
</dbReference>
<dbReference type="CDD" id="cd00310">
    <property type="entry name" value="ATP-synt_Fo_a_6"/>
    <property type="match status" value="1"/>
</dbReference>
<dbReference type="FunFam" id="1.20.120.220:FF:000001">
    <property type="entry name" value="ATP synthase subunit a, chloroplastic"/>
    <property type="match status" value="1"/>
</dbReference>
<dbReference type="Gene3D" id="1.20.120.220">
    <property type="entry name" value="ATP synthase, F0 complex, subunit A"/>
    <property type="match status" value="1"/>
</dbReference>
<dbReference type="HAMAP" id="MF_01393">
    <property type="entry name" value="ATP_synth_a_bact"/>
    <property type="match status" value="1"/>
</dbReference>
<dbReference type="InterPro" id="IPR045082">
    <property type="entry name" value="ATP_syn_F0_a_bact/chloroplast"/>
</dbReference>
<dbReference type="InterPro" id="IPR000568">
    <property type="entry name" value="ATP_synth_F0_asu"/>
</dbReference>
<dbReference type="InterPro" id="IPR023011">
    <property type="entry name" value="ATP_synth_F0_asu_AS"/>
</dbReference>
<dbReference type="InterPro" id="IPR035908">
    <property type="entry name" value="F0_ATP_A_sf"/>
</dbReference>
<dbReference type="NCBIfam" id="TIGR01131">
    <property type="entry name" value="ATP_synt_6_or_A"/>
    <property type="match status" value="1"/>
</dbReference>
<dbReference type="PANTHER" id="PTHR42823">
    <property type="entry name" value="ATP SYNTHASE SUBUNIT A, CHLOROPLASTIC"/>
    <property type="match status" value="1"/>
</dbReference>
<dbReference type="PANTHER" id="PTHR42823:SF3">
    <property type="entry name" value="ATP SYNTHASE SUBUNIT A, CHLOROPLASTIC"/>
    <property type="match status" value="1"/>
</dbReference>
<dbReference type="Pfam" id="PF00119">
    <property type="entry name" value="ATP-synt_A"/>
    <property type="match status" value="1"/>
</dbReference>
<dbReference type="PRINTS" id="PR00123">
    <property type="entry name" value="ATPASEA"/>
</dbReference>
<dbReference type="SUPFAM" id="SSF81336">
    <property type="entry name" value="F1F0 ATP synthase subunit A"/>
    <property type="match status" value="1"/>
</dbReference>
<dbReference type="PROSITE" id="PS00449">
    <property type="entry name" value="ATPASE_A"/>
    <property type="match status" value="1"/>
</dbReference>
<geneLocation type="chloroplast"/>
<organism>
    <name type="scientific">Tupiella akineta</name>
    <name type="common">Green alga</name>
    <name type="synonym">Pseudendoclonium akinetum</name>
    <dbReference type="NCBI Taxonomy" id="160070"/>
    <lineage>
        <taxon>Eukaryota</taxon>
        <taxon>Viridiplantae</taxon>
        <taxon>Chlorophyta</taxon>
        <taxon>Ulvophyceae</taxon>
        <taxon>OUU clade</taxon>
        <taxon>Ulotrichales</taxon>
        <taxon>Tupiellaceae</taxon>
        <taxon>Tupiella</taxon>
    </lineage>
</organism>
<proteinExistence type="inferred from homology"/>
<reference key="1">
    <citation type="journal article" date="2005" name="Mol. Biol. Evol.">
        <title>The chloroplast genome sequence of the green alga Pseudendoclonium akinetum (Ulvophyceae) reveals unusual structural features and new insights into the branching order of chlorophyte lineages.</title>
        <authorList>
            <person name="Pombert J.-F."/>
            <person name="Otis C."/>
            <person name="Lemieux C."/>
            <person name="Turmel M."/>
        </authorList>
    </citation>
    <scope>NUCLEOTIDE SEQUENCE [LARGE SCALE GENOMIC DNA]</scope>
    <source>
        <strain>UTEX 1912</strain>
    </source>
</reference>
<protein>
    <recommendedName>
        <fullName evidence="1">ATP synthase subunit a, chloroplastic</fullName>
    </recommendedName>
    <alternativeName>
        <fullName evidence="1">ATP synthase F0 sector subunit a</fullName>
    </alternativeName>
    <alternativeName>
        <fullName evidence="1">F-ATPase subunit IV</fullName>
    </alternativeName>
</protein>
<comment type="function">
    <text evidence="1">Key component of the proton channel; it plays a direct role in the translocation of protons across the membrane.</text>
</comment>
<comment type="subunit">
    <text evidence="1">F-type ATPases have 2 components, CF(1) - the catalytic core - and CF(0) - the membrane proton channel. CF(1) has five subunits: alpha(3), beta(3), gamma(1), delta(1), epsilon(1). CF(0) has four main subunits: a, b, b' and c.</text>
</comment>
<comment type="subcellular location">
    <subcellularLocation>
        <location evidence="1">Plastid</location>
        <location evidence="1">Chloroplast thylakoid membrane</location>
        <topology evidence="1">Multi-pass membrane protein</topology>
    </subcellularLocation>
</comment>
<comment type="similarity">
    <text evidence="1">Belongs to the ATPase A chain family.</text>
</comment>
<name>ATPI_TUPAK</name>